<comment type="function">
    <text evidence="1">Involved in the synthesis of cell wall sulfolipids.</text>
</comment>
<comment type="similarity">
    <text evidence="3">Belongs to the sulfotransferase 1 family.</text>
</comment>
<accession>A1KIG2</accession>
<gene>
    <name type="ordered locus">BCG_1434</name>
</gene>
<sequence>MNSEHPMTDRVVYRSLMADNLRWDALQLRDGDIIISAPSKSGLTWTQRLVSLLVFDGPDLPGPLSTVSPWLDQTIRPIEEVVATLDAQQHRRFIKTHTPLDGLVLDDRVSYICVGRDPRDAAVSMLYQSANMNEDRMRILHEAVVPFHERIAPPPFAELGHARSPTEEFRDWMEGPNQPPPGIGFTHLKGIGTLANILHQLGTVWVRRHLPNVALFHYADYQADLAGELLRLARVLGIAATRDRARDLAQYATLDAMRSRASEIAPNTTDGIWHSDERFFRRGGSGDWQQFFTEAEHLRYYHRINQLAPPDLLAWAHEGRRGYDPAN</sequence>
<protein>
    <recommendedName>
        <fullName>Glycolipid sulfotransferase BCG_1434</fullName>
        <ecNumber>2.8.2.-</ecNumber>
    </recommendedName>
</protein>
<keyword id="KW-0808">Transferase</keyword>
<dbReference type="EC" id="2.8.2.-"/>
<dbReference type="EMBL" id="AM408590">
    <property type="protein sequence ID" value="CAL71421.1"/>
    <property type="molecule type" value="Genomic_DNA"/>
</dbReference>
<dbReference type="RefSeq" id="WP_011799177.1">
    <property type="nucleotide sequence ID" value="NC_008769.1"/>
</dbReference>
<dbReference type="SMR" id="A1KIG2"/>
<dbReference type="KEGG" id="mbb:BCG_1434"/>
<dbReference type="HOGENOM" id="CLU_027239_3_0_11"/>
<dbReference type="Proteomes" id="UP000001472">
    <property type="component" value="Chromosome"/>
</dbReference>
<dbReference type="GO" id="GO:0008146">
    <property type="term" value="F:sulfotransferase activity"/>
    <property type="evidence" value="ECO:0007669"/>
    <property type="project" value="InterPro"/>
</dbReference>
<dbReference type="Gene3D" id="3.40.50.300">
    <property type="entry name" value="P-loop containing nucleotide triphosphate hydrolases"/>
    <property type="match status" value="1"/>
</dbReference>
<dbReference type="InterPro" id="IPR027417">
    <property type="entry name" value="P-loop_NTPase"/>
</dbReference>
<dbReference type="InterPro" id="IPR000863">
    <property type="entry name" value="Sulfotransferase_dom"/>
</dbReference>
<dbReference type="PANTHER" id="PTHR11783">
    <property type="entry name" value="SULFOTRANSFERASE SULT"/>
    <property type="match status" value="1"/>
</dbReference>
<dbReference type="Pfam" id="PF00685">
    <property type="entry name" value="Sulfotransfer_1"/>
    <property type="match status" value="1"/>
</dbReference>
<dbReference type="SUPFAM" id="SSF52540">
    <property type="entry name" value="P-loop containing nucleoside triphosphate hydrolases"/>
    <property type="match status" value="1"/>
</dbReference>
<evidence type="ECO:0000250" key="1"/>
<evidence type="ECO:0000255" key="2"/>
<evidence type="ECO:0000305" key="3"/>
<proteinExistence type="inferred from homology"/>
<feature type="chain" id="PRO_0000315391" description="Glycolipid sulfotransferase BCG_1434">
    <location>
        <begin position="1"/>
        <end position="327"/>
    </location>
</feature>
<feature type="active site" description="Proton acceptor" evidence="2">
    <location>
        <position position="97"/>
    </location>
</feature>
<feature type="binding site" evidence="1">
    <location>
        <begin position="40"/>
        <end position="45"/>
    </location>
    <ligand>
        <name>3'-phosphoadenylyl sulfate</name>
        <dbReference type="ChEBI" id="CHEBI:58339"/>
    </ligand>
</feature>
<feature type="binding site" evidence="1">
    <location>
        <begin position="116"/>
        <end position="124"/>
    </location>
    <ligand>
        <name>3'-phosphoadenylyl sulfate</name>
        <dbReference type="ChEBI" id="CHEBI:58339"/>
    </ligand>
</feature>
<reference key="1">
    <citation type="journal article" date="2007" name="Proc. Natl. Acad. Sci. U.S.A.">
        <title>Genome plasticity of BCG and impact on vaccine efficacy.</title>
        <authorList>
            <person name="Brosch R."/>
            <person name="Gordon S.V."/>
            <person name="Garnier T."/>
            <person name="Eiglmeier K."/>
            <person name="Frigui W."/>
            <person name="Valenti P."/>
            <person name="Dos Santos S."/>
            <person name="Duthoy S."/>
            <person name="Lacroix C."/>
            <person name="Garcia-Pelayo C."/>
            <person name="Inwald J.K."/>
            <person name="Golby P."/>
            <person name="Garcia J.N."/>
            <person name="Hewinson R.G."/>
            <person name="Behr M.A."/>
            <person name="Quail M.A."/>
            <person name="Churcher C."/>
            <person name="Barrell B.G."/>
            <person name="Parkhill J."/>
            <person name="Cole S.T."/>
        </authorList>
    </citation>
    <scope>NUCLEOTIDE SEQUENCE [LARGE SCALE GENOMIC DNA]</scope>
    <source>
        <strain>BCG / Pasteur 1173P2</strain>
    </source>
</reference>
<organism>
    <name type="scientific">Mycobacterium bovis (strain BCG / Pasteur 1173P2)</name>
    <dbReference type="NCBI Taxonomy" id="410289"/>
    <lineage>
        <taxon>Bacteria</taxon>
        <taxon>Bacillati</taxon>
        <taxon>Actinomycetota</taxon>
        <taxon>Actinomycetes</taxon>
        <taxon>Mycobacteriales</taxon>
        <taxon>Mycobacteriaceae</taxon>
        <taxon>Mycobacterium</taxon>
        <taxon>Mycobacterium tuberculosis complex</taxon>
    </lineage>
</organism>
<name>GLST_MYCBP</name>